<comment type="function">
    <text evidence="1 2 6 8 9">Synthesizes short RNA primers for the lagging strand DNA replication (PubMed:11735390, PubMed:22869700, PubMed:2422175, PubMed:3038901). The primase synthesizes short RNA primers on the lagging strand that the polymerase elongates using dNTPs (PubMed:2422175, PubMed:3038901). Recognizes two trinucleotide sequences 5'-GTT-3' and 5'-GCT-3' in vitro, but uses only the first as the priming site in vivo (PubMed:2422175).</text>
</comment>
<comment type="subunit">
    <text evidence="1 2 3 4 5 6 7">Monomer (PubMed:11735390). Hexamer (PubMed:11735390, PubMed:15738414, PubMed:15897200). Interacts with the DnaB-like replicative helicase; this interaction forms the active primosome complex, which is composed of 6 helicase and 1 primase subunits and expresses full helicase and primase activities (PubMed:11735390, PubMed:22869700, PubMed:23578280). Interacts (via C-terminus) with the single-stranded DNA-binding protein (PubMed:11735390). Part of the replicase complex that includes the DNA polymerase, the polymerase clamp, the clamp loader complex, the single-stranded DNA binding protein, the primase, the DnaB-like replicative helicase and the helicase assembly factor (PubMed:16800624).</text>
</comment>
<comment type="similarity">
    <text evidence="1">Belongs to the Tequatrovirus DNA primase family.</text>
</comment>
<keyword id="KW-0002">3D-structure</keyword>
<keyword id="KW-0235">DNA replication</keyword>
<keyword id="KW-0244">Early protein</keyword>
<keyword id="KW-0479">Metal-binding</keyword>
<keyword id="KW-1185">Reference proteome</keyword>
<keyword id="KW-0808">Transferase</keyword>
<keyword id="KW-1194">Viral DNA replication</keyword>
<keyword id="KW-0862">Zinc</keyword>
<organismHost>
    <name type="scientific">Escherichia coli</name>
    <dbReference type="NCBI Taxonomy" id="562"/>
</organismHost>
<sequence length="342" mass="39778">MSSIPWIDNEFAYRALAHLPKFTQVNNSSTFKLRFRCPVCGDSKTDQNKARGWYYGDNNEGNIHCYNCNYHAPIGIYLKEFEPDLYREYIFEIRKEKGKSRPIEKPKELPKQPEKKIIKSLPSCVRLDKLAEDHPIIKYVKARCIPKDKWKYLWFTTEWPKLVNSIAPGTYKKEISEPRLVIPIYNANGKAESFQGRALKKDAPQKYITIEAYPEATKIYGVERVKDGDVYVLEGPIDSLFIENGIAITGGQLDLEVVPFKDRRVWVLDNEPRHPDTIKRMTKLVDAGERVMFWDKSPWKSKDVNDMIRKEGATPEQIMEYMKNNIAQGLMAKMRLSKYAKI</sequence>
<name>PRIM_BPT4</name>
<accession>P04520</accession>
<dbReference type="EC" id="2.7.7.-" evidence="1 2 6 8"/>
<dbReference type="EMBL" id="AF158101">
    <property type="protein sequence ID" value="AAD42502.1"/>
    <property type="molecule type" value="Genomic_DNA"/>
</dbReference>
<dbReference type="EMBL" id="X01416">
    <property type="protein sequence ID" value="CAA25659.1"/>
    <property type="molecule type" value="Genomic_DNA"/>
</dbReference>
<dbReference type="EMBL" id="K03113">
    <property type="protein sequence ID" value="AAA32554.1"/>
    <property type="molecule type" value="Genomic_DNA"/>
</dbReference>
<dbReference type="EMBL" id="S57514">
    <property type="protein sequence ID" value="AAB25713.1"/>
    <property type="molecule type" value="Genomic_DNA"/>
</dbReference>
<dbReference type="PIR" id="A94456">
    <property type="entry name" value="Z8BPT4"/>
</dbReference>
<dbReference type="RefSeq" id="NP_049648.1">
    <property type="nucleotide sequence ID" value="NC_000866.4"/>
</dbReference>
<dbReference type="PDB" id="8DVI">
    <property type="method" value="EM"/>
    <property type="resolution" value="3.20 A"/>
    <property type="chains" value="H=1-342"/>
</dbReference>
<dbReference type="PDB" id="8DW6">
    <property type="method" value="EM"/>
    <property type="resolution" value="3.50 A"/>
    <property type="chains" value="H=1-342"/>
</dbReference>
<dbReference type="PDB" id="8DWJ">
    <property type="method" value="EM"/>
    <property type="resolution" value="3.90 A"/>
    <property type="chains" value="A=1-342"/>
</dbReference>
<dbReference type="PDB" id="8GAO">
    <property type="method" value="EM"/>
    <property type="resolution" value="4.10 A"/>
    <property type="chains" value="G=3-341"/>
</dbReference>
<dbReference type="PDBsum" id="8DVI"/>
<dbReference type="PDBsum" id="8DW6"/>
<dbReference type="PDBsum" id="8DWJ"/>
<dbReference type="PDBsum" id="8GAO"/>
<dbReference type="EMDB" id="EMD-27737"/>
<dbReference type="EMDB" id="EMD-27739"/>
<dbReference type="EMDB" id="EMD-27751"/>
<dbReference type="EMDB" id="EMD-27756"/>
<dbReference type="EMDB" id="EMD-29902"/>
<dbReference type="SMR" id="P04520"/>
<dbReference type="GeneID" id="1258798"/>
<dbReference type="KEGG" id="vg:1258798"/>
<dbReference type="OrthoDB" id="4202at10239"/>
<dbReference type="Proteomes" id="UP000009087">
    <property type="component" value="Segment"/>
</dbReference>
<dbReference type="GO" id="GO:0003899">
    <property type="term" value="F:DNA-directed RNA polymerase activity"/>
    <property type="evidence" value="ECO:0000314"/>
    <property type="project" value="UniProtKB"/>
</dbReference>
<dbReference type="GO" id="GO:0046872">
    <property type="term" value="F:metal ion binding"/>
    <property type="evidence" value="ECO:0007669"/>
    <property type="project" value="UniProtKB-KW"/>
</dbReference>
<dbReference type="GO" id="GO:0006260">
    <property type="term" value="P:DNA replication"/>
    <property type="evidence" value="ECO:0007669"/>
    <property type="project" value="UniProtKB-KW"/>
</dbReference>
<dbReference type="GO" id="GO:0039693">
    <property type="term" value="P:viral DNA genome replication"/>
    <property type="evidence" value="ECO:0000314"/>
    <property type="project" value="CACAO"/>
</dbReference>
<dbReference type="HAMAP" id="MF_04157">
    <property type="entry name" value="PRIMASE_T4"/>
    <property type="match status" value="1"/>
</dbReference>
<dbReference type="InterPro" id="IPR046392">
    <property type="entry name" value="PRIMASE_T4"/>
</dbReference>
<dbReference type="SUPFAM" id="SSF56731">
    <property type="entry name" value="DNA primase core"/>
    <property type="match status" value="1"/>
</dbReference>
<feature type="chain" id="PRO_0000164926" description="DNA primase">
    <location>
        <begin position="1"/>
        <end position="342"/>
    </location>
</feature>
<feature type="binding site" evidence="11">
    <location>
        <position position="37"/>
    </location>
    <ligand>
        <name>Zn(2+)</name>
        <dbReference type="ChEBI" id="CHEBI:29105"/>
    </ligand>
</feature>
<feature type="binding site" evidence="11">
    <location>
        <position position="40"/>
    </location>
    <ligand>
        <name>Zn(2+)</name>
        <dbReference type="ChEBI" id="CHEBI:29105"/>
    </ligand>
</feature>
<feature type="binding site" evidence="11">
    <location>
        <position position="65"/>
    </location>
    <ligand>
        <name>Zn(2+)</name>
        <dbReference type="ChEBI" id="CHEBI:29105"/>
    </ligand>
</feature>
<feature type="binding site" evidence="11">
    <location>
        <position position="68"/>
    </location>
    <ligand>
        <name>Zn(2+)</name>
        <dbReference type="ChEBI" id="CHEBI:29105"/>
    </ligand>
</feature>
<feature type="helix" evidence="12">
    <location>
        <begin position="5"/>
        <end position="17"/>
    </location>
</feature>
<feature type="strand" evidence="12">
    <location>
        <begin position="18"/>
        <end position="21"/>
    </location>
</feature>
<feature type="strand" evidence="12">
    <location>
        <begin position="23"/>
        <end position="26"/>
    </location>
</feature>
<feature type="strand" evidence="12">
    <location>
        <begin position="31"/>
        <end position="35"/>
    </location>
</feature>
<feature type="turn" evidence="12">
    <location>
        <begin position="38"/>
        <end position="40"/>
    </location>
</feature>
<feature type="strand" evidence="12">
    <location>
        <begin position="52"/>
        <end position="55"/>
    </location>
</feature>
<feature type="strand" evidence="12">
    <location>
        <begin position="57"/>
        <end position="60"/>
    </location>
</feature>
<feature type="strand" evidence="12">
    <location>
        <begin position="62"/>
        <end position="68"/>
    </location>
</feature>
<feature type="strand" evidence="12">
    <location>
        <begin position="71"/>
        <end position="73"/>
    </location>
</feature>
<feature type="helix" evidence="12">
    <location>
        <begin position="74"/>
        <end position="81"/>
    </location>
</feature>
<feature type="helix" evidence="12">
    <location>
        <begin position="83"/>
        <end position="95"/>
    </location>
</feature>
<feature type="strand" evidence="12">
    <location>
        <begin position="124"/>
        <end position="127"/>
    </location>
</feature>
<feature type="helix" evidence="12">
    <location>
        <begin position="135"/>
        <end position="142"/>
    </location>
</feature>
<feature type="helix" evidence="12">
    <location>
        <begin position="147"/>
        <end position="152"/>
    </location>
</feature>
<feature type="strand" evidence="12">
    <location>
        <begin position="154"/>
        <end position="157"/>
    </location>
</feature>
<feature type="helix" evidence="12">
    <location>
        <begin position="159"/>
        <end position="166"/>
    </location>
</feature>
<feature type="strand" evidence="12">
    <location>
        <begin position="179"/>
        <end position="185"/>
    </location>
</feature>
<feature type="strand" evidence="12">
    <location>
        <begin position="191"/>
        <end position="198"/>
    </location>
</feature>
<feature type="strand" evidence="12">
    <location>
        <begin position="200"/>
        <end position="202"/>
    </location>
</feature>
<feature type="strand" evidence="12">
    <location>
        <begin position="206"/>
        <end position="213"/>
    </location>
</feature>
<feature type="strand" evidence="13">
    <location>
        <begin position="219"/>
        <end position="221"/>
    </location>
</feature>
<feature type="helix" evidence="12">
    <location>
        <begin position="222"/>
        <end position="224"/>
    </location>
</feature>
<feature type="strand" evidence="12">
    <location>
        <begin position="230"/>
        <end position="234"/>
    </location>
</feature>
<feature type="helix" evidence="12">
    <location>
        <begin position="238"/>
        <end position="241"/>
    </location>
</feature>
<feature type="strand" evidence="12">
    <location>
        <begin position="245"/>
        <end position="248"/>
    </location>
</feature>
<feature type="turn" evidence="12">
    <location>
        <begin position="261"/>
        <end position="263"/>
    </location>
</feature>
<feature type="strand" evidence="12">
    <location>
        <begin position="264"/>
        <end position="266"/>
    </location>
</feature>
<feature type="helix" evidence="12">
    <location>
        <begin position="275"/>
        <end position="286"/>
    </location>
</feature>
<feature type="strand" evidence="12">
    <location>
        <begin position="290"/>
        <end position="292"/>
    </location>
</feature>
<feature type="strand" evidence="13">
    <location>
        <begin position="301"/>
        <end position="303"/>
    </location>
</feature>
<feature type="helix" evidence="12">
    <location>
        <begin position="304"/>
        <end position="311"/>
    </location>
</feature>
<feature type="helix" evidence="12">
    <location>
        <begin position="315"/>
        <end position="324"/>
    </location>
</feature>
<feature type="strand" evidence="12">
    <location>
        <begin position="326"/>
        <end position="328"/>
    </location>
</feature>
<feature type="helix" evidence="12">
    <location>
        <begin position="330"/>
        <end position="339"/>
    </location>
</feature>
<proteinExistence type="evidence at protein level"/>
<organism>
    <name type="scientific">Enterobacteria phage T4</name>
    <name type="common">Bacteriophage T4</name>
    <dbReference type="NCBI Taxonomy" id="10665"/>
    <lineage>
        <taxon>Viruses</taxon>
        <taxon>Duplodnaviria</taxon>
        <taxon>Heunggongvirae</taxon>
        <taxon>Uroviricota</taxon>
        <taxon>Caudoviricetes</taxon>
        <taxon>Straboviridae</taxon>
        <taxon>Tevenvirinae</taxon>
        <taxon>Tequatrovirus</taxon>
    </lineage>
</organism>
<gene>
    <name type="primary">61</name>
    <name evidence="10" type="synonym">58</name>
</gene>
<evidence type="ECO:0000255" key="1">
    <source>
        <dbReference type="HAMAP-Rule" id="MF_04157"/>
    </source>
</evidence>
<evidence type="ECO:0000269" key="2">
    <source>
    </source>
</evidence>
<evidence type="ECO:0000269" key="3">
    <source>
    </source>
</evidence>
<evidence type="ECO:0000269" key="4">
    <source>
    </source>
</evidence>
<evidence type="ECO:0000269" key="5">
    <source>
    </source>
</evidence>
<evidence type="ECO:0000269" key="6">
    <source>
    </source>
</evidence>
<evidence type="ECO:0000269" key="7">
    <source>
    </source>
</evidence>
<evidence type="ECO:0000269" key="8">
    <source>
    </source>
</evidence>
<evidence type="ECO:0000269" key="9">
    <source>
    </source>
</evidence>
<evidence type="ECO:0000303" key="10">
    <source>
    </source>
</evidence>
<evidence type="ECO:0000305" key="11">
    <source>
    </source>
</evidence>
<evidence type="ECO:0007829" key="12">
    <source>
        <dbReference type="PDB" id="8DVI"/>
    </source>
</evidence>
<evidence type="ECO:0007829" key="13">
    <source>
        <dbReference type="PDB" id="8DW6"/>
    </source>
</evidence>
<reference key="1">
    <citation type="journal article" date="2003" name="Microbiol. Mol. Biol. Rev.">
        <title>Bacteriophage T4 genome.</title>
        <authorList>
            <person name="Miller E.S."/>
            <person name="Kutter E."/>
            <person name="Mosig G."/>
            <person name="Arisaka F."/>
            <person name="Kunisawa T."/>
            <person name="Ruger W."/>
        </authorList>
    </citation>
    <scope>NUCLEOTIDE SEQUENCE [LARGE SCALE GENOMIC DNA]</scope>
</reference>
<reference key="2">
    <citation type="submission" date="1999-07" db="EMBL/GenBank/DDBJ databases">
        <authorList>
            <person name="Nakanishi M."/>
            <person name="Alberts B.M."/>
        </authorList>
    </citation>
    <scope>NUCLEOTIDE SEQUENCE [GENOMIC DNA] OF 1-211</scope>
</reference>
<reference key="3">
    <citation type="journal article" date="1984" name="EMBO J.">
        <title>Regulation of a new bacteriophage T4 gene, 69, that spans an origin of DNA replication.</title>
        <authorList>
            <person name="McDonald P.M."/>
            <person name="Mosig G."/>
        </authorList>
    </citation>
    <scope>NUCLEOTIDE SEQUENCE [GENOMIC DNA] OF 212-342</scope>
</reference>
<reference key="4">
    <citation type="journal article" date="1993" name="J. Virol.">
        <title>Analysis of five presumptive protein-coding sequences clustered between the primosome genes, 41 and 61, of bacteriophages T4, T2, and T6.</title>
        <authorList>
            <person name="Selick H.E."/>
            <person name="Stormo G.D."/>
            <person name="Dyson R.L."/>
            <person name="Alberts B.M."/>
        </authorList>
    </citation>
    <scope>NUCLEOTIDE SEQUENCE [GENOMIC DNA] OF 1-8</scope>
</reference>
<reference key="5">
    <citation type="journal article" date="1986" name="J. Biol. Chem.">
        <title>Studies of the DNA helicase-RNA primase unit from bacteriophage T4. A trinucleotide sequence on the DNA template starts RNA primer synthesis.</title>
        <authorList>
            <person name="Cha T.A."/>
            <person name="Alberts B.M."/>
        </authorList>
    </citation>
    <scope>FUNCTION</scope>
    <scope>CATALYTIC ACTIVITY</scope>
</reference>
<reference key="6">
    <citation type="journal article" date="1987" name="J. Biol. Chem.">
        <title>Bacteriophage T4 DNA primase-helicase. Characterization of the DNA synthesis primed by T4 61 protein in the absence of T4 41 protein.</title>
        <authorList>
            <person name="Nossal N.G."/>
            <person name="Hinton D.M."/>
        </authorList>
    </citation>
    <scope>FUNCTION</scope>
</reference>
<reference key="7">
    <citation type="journal article" date="2001" name="Annu. Rev. Biochem.">
        <title>Replisome-mediated DNA replication.</title>
        <authorList>
            <person name="Benkovic S.J."/>
            <person name="Valentine A.M."/>
            <person name="Salinas F."/>
        </authorList>
    </citation>
    <scope>REVIEW</scope>
</reference>
<reference key="8">
    <citation type="journal article" date="2001" name="Biochemistry">
        <title>A zinc ribbon protein in DNA replication: primer synthesis and macromolecular interactions by the bacteriophage T4 primase.</title>
        <authorList>
            <person name="Valentine A.M."/>
            <person name="Ishmael F.T."/>
            <person name="Shier V.K."/>
            <person name="Benkovic S.J."/>
        </authorList>
    </citation>
    <scope>DOMAIN</scope>
    <scope>SUBUNIT</scope>
    <scope>CATALYTIC ACTIVITY</scope>
    <scope>INTERACTION WITH THE DNAB-LIKE REPLICATIVE HELICASE</scope>
    <scope>INTERACTION WITH THE SINGLE-STRANDED DNA-BINDING PROTEIN</scope>
    <scope>FUNCTION</scope>
</reference>
<reference key="9">
    <citation type="journal article" date="2005" name="J. Biol. Chem.">
        <title>The oligomeric T4 primase is the functional form during replication.</title>
        <authorList>
            <person name="Yang J."/>
            <person name="Xi J."/>
            <person name="Zhuang Z."/>
            <person name="Benkovic S.J."/>
        </authorList>
    </citation>
    <scope>SUBUNIT</scope>
</reference>
<reference key="10">
    <citation type="journal article" date="2006" name="Biochemistry">
        <title>Single-molecule investigation of the T4 bacteriophage DNA polymerase holoenzyme: multiple pathways of holoenzyme formation.</title>
        <authorList>
            <person name="Smiley R.D."/>
            <person name="Zhuang Z."/>
            <person name="Benkovic S.J."/>
            <person name="Hammes G.G."/>
        </authorList>
    </citation>
    <scope>IDENTIFICATION IN THE REPLICASE COMPLEX</scope>
</reference>
<reference key="11">
    <citation type="journal article" date="2012" name="Proc. Natl. Acad. Sci. U.S.A.">
        <title>Assembly and subunit stoichiometry of the functional helicase-primase (primosome) complex of bacteriophage T4.</title>
        <authorList>
            <person name="Jose D."/>
            <person name="Weitzel S.E."/>
            <person name="Jing D."/>
            <person name="von Hippel P.H."/>
        </authorList>
    </citation>
    <scope>FUNCTION</scope>
    <scope>INTERACTION WITH THE DNAB-LIKE REPLICATIVE HELICASE</scope>
    <scope>SUBUNIT</scope>
    <scope>CATALYTIC ACTIVITY</scope>
</reference>
<reference key="12">
    <citation type="journal article" date="2013" name="Biochemistry">
        <title>A single-molecule view of the assembly pathway, subunit stoichiometry, and unwinding activity of the bacteriophage T4 primosome (helicase-primase) complex.</title>
        <authorList>
            <person name="Lee W."/>
            <person name="Jose D."/>
            <person name="Phelps C."/>
            <person name="Marcus A.H."/>
            <person name="von Hippel P.H."/>
        </authorList>
    </citation>
    <scope>FUNCTION</scope>
    <scope>INTERACTION WITH THE DNAB-LIKE REPLICATIVE HELICASE</scope>
    <scope>SUBUNIT</scope>
</reference>
<reference key="13">
    <citation type="journal article" date="2005" name="Proc. Natl. Acad. Sci. U.S.A.">
        <title>Architecture of the bacteriophage T4 primosome: electron microscopy studies of helicase (gp41) and primase (gp61).</title>
        <authorList>
            <person name="Norcum M.T."/>
            <person name="Warrington J.A."/>
            <person name="Spiering M.M."/>
            <person name="Ishmael F.T."/>
            <person name="Trakselis M.A."/>
            <person name="Benkovic S.J."/>
        </authorList>
    </citation>
    <scope>STRUCTURE BY ELECTRON MICROSCOPY</scope>
    <scope>SUBUNIT</scope>
</reference>
<protein>
    <recommendedName>
        <fullName evidence="1">DNA primase</fullName>
        <ecNumber evidence="1 2 6 8">2.7.7.-</ecNumber>
    </recommendedName>
    <alternativeName>
        <fullName evidence="1">DNA priming protein</fullName>
    </alternativeName>
</protein>